<organism>
    <name type="scientific">Sulfurisphaera tokodaii (strain DSM 16993 / JCM 10545 / NBRC 100140 / 7)</name>
    <name type="common">Sulfolobus tokodaii</name>
    <dbReference type="NCBI Taxonomy" id="273063"/>
    <lineage>
        <taxon>Archaea</taxon>
        <taxon>Thermoproteota</taxon>
        <taxon>Thermoprotei</taxon>
        <taxon>Sulfolobales</taxon>
        <taxon>Sulfolobaceae</taxon>
        <taxon>Sulfurisphaera</taxon>
    </lineage>
</organism>
<reference key="1">
    <citation type="journal article" date="2001" name="DNA Res.">
        <title>Complete genome sequence of an aerobic thermoacidophilic Crenarchaeon, Sulfolobus tokodaii strain7.</title>
        <authorList>
            <person name="Kawarabayasi Y."/>
            <person name="Hino Y."/>
            <person name="Horikawa H."/>
            <person name="Jin-no K."/>
            <person name="Takahashi M."/>
            <person name="Sekine M."/>
            <person name="Baba S."/>
            <person name="Ankai A."/>
            <person name="Kosugi H."/>
            <person name="Hosoyama A."/>
            <person name="Fukui S."/>
            <person name="Nagai Y."/>
            <person name="Nishijima K."/>
            <person name="Otsuka R."/>
            <person name="Nakazawa H."/>
            <person name="Takamiya M."/>
            <person name="Kato Y."/>
            <person name="Yoshizawa T."/>
            <person name="Tanaka T."/>
            <person name="Kudoh Y."/>
            <person name="Yamazaki J."/>
            <person name="Kushida N."/>
            <person name="Oguchi A."/>
            <person name="Aoki K."/>
            <person name="Masuda S."/>
            <person name="Yanagii M."/>
            <person name="Nishimura M."/>
            <person name="Yamagishi A."/>
            <person name="Oshima T."/>
            <person name="Kikuchi H."/>
        </authorList>
    </citation>
    <scope>NUCLEOTIDE SEQUENCE [LARGE SCALE GENOMIC DNA]</scope>
    <source>
        <strain>DSM 16993 / JCM 10545 / NBRC 100140 / 7</strain>
    </source>
</reference>
<name>TOP6A_SULTO</name>
<gene>
    <name evidence="1" type="primary">top6A</name>
    <name type="ordered locus">STK_12950</name>
</gene>
<proteinExistence type="inferred from homology"/>
<accession>Q971T1</accession>
<sequence length="387" mass="45087">MSSELTSKVDKEARKKAADTLRQVFVKLIEQINNSEPPTMEIPKRTLGNTIYDEKRKLLLLGEEKLKRSFFDLNESKRFMQTVLMASIIYDALINDEYPTIRDLYYRGKHSIILKDPRGKTYEENTWDEQKESDSVIMDIEVFTSLLREDMLILSKEKGKVVGDMRIRSGNDIIDLSKMGHGAYSIEPTPDLIDFVDINAEFVLVVEKDAVFQQLHRAGFWKQYKAILVTSAGQPDRATRRFVRRLNEELKLPVYILTDADPYGWYIYSVFRIGSISLSYESERLATPNAKFLGVSMTDIFGDSNKKPYLSEQERRNYIIKAKDADIKRATEIKNYQWFKTKAWQHEIEIFLNKKSKLEIEAMASKGLKFLAFQYIPEKIKSKDYIE</sequence>
<keyword id="KW-0067">ATP-binding</keyword>
<keyword id="KW-0238">DNA-binding</keyword>
<keyword id="KW-0413">Isomerase</keyword>
<keyword id="KW-0460">Magnesium</keyword>
<keyword id="KW-0479">Metal-binding</keyword>
<keyword id="KW-0547">Nucleotide-binding</keyword>
<keyword id="KW-1185">Reference proteome</keyword>
<keyword id="KW-0799">Topoisomerase</keyword>
<dbReference type="EC" id="5.6.2.2" evidence="1"/>
<dbReference type="EMBL" id="BA000023">
    <property type="protein sequence ID" value="BAB66339.1"/>
    <property type="molecule type" value="Genomic_DNA"/>
</dbReference>
<dbReference type="RefSeq" id="WP_010979317.1">
    <property type="nucleotide sequence ID" value="NC_003106.2"/>
</dbReference>
<dbReference type="SMR" id="Q971T1"/>
<dbReference type="STRING" id="273063.STK_12950"/>
<dbReference type="KEGG" id="sto:STK_12950"/>
<dbReference type="PATRIC" id="fig|273063.9.peg.1456"/>
<dbReference type="eggNOG" id="arCOG04143">
    <property type="taxonomic scope" value="Archaea"/>
</dbReference>
<dbReference type="OrthoDB" id="5866at2157"/>
<dbReference type="Proteomes" id="UP000001015">
    <property type="component" value="Chromosome"/>
</dbReference>
<dbReference type="GO" id="GO:0005694">
    <property type="term" value="C:chromosome"/>
    <property type="evidence" value="ECO:0007669"/>
    <property type="project" value="InterPro"/>
</dbReference>
<dbReference type="GO" id="GO:0005524">
    <property type="term" value="F:ATP binding"/>
    <property type="evidence" value="ECO:0007669"/>
    <property type="project" value="UniProtKB-KW"/>
</dbReference>
<dbReference type="GO" id="GO:0003677">
    <property type="term" value="F:DNA binding"/>
    <property type="evidence" value="ECO:0007669"/>
    <property type="project" value="UniProtKB-UniRule"/>
</dbReference>
<dbReference type="GO" id="GO:0003918">
    <property type="term" value="F:DNA topoisomerase type II (double strand cut, ATP-hydrolyzing) activity"/>
    <property type="evidence" value="ECO:0007669"/>
    <property type="project" value="UniProtKB-UniRule"/>
</dbReference>
<dbReference type="GO" id="GO:0000287">
    <property type="term" value="F:magnesium ion binding"/>
    <property type="evidence" value="ECO:0007669"/>
    <property type="project" value="UniProtKB-UniRule"/>
</dbReference>
<dbReference type="GO" id="GO:0006265">
    <property type="term" value="P:DNA topological change"/>
    <property type="evidence" value="ECO:0007669"/>
    <property type="project" value="UniProtKB-UniRule"/>
</dbReference>
<dbReference type="CDD" id="cd00223">
    <property type="entry name" value="TOPRIM_TopoIIB_SPO"/>
    <property type="match status" value="1"/>
</dbReference>
<dbReference type="FunFam" id="1.10.10.10:FF:000655">
    <property type="entry name" value="Type 2 DNA topoisomerase 6 subunit A"/>
    <property type="match status" value="1"/>
</dbReference>
<dbReference type="FunFam" id="3.40.1360.10:FF:000011">
    <property type="entry name" value="Type 2 DNA topoisomerase 6 subunit A"/>
    <property type="match status" value="1"/>
</dbReference>
<dbReference type="Gene3D" id="3.40.1360.10">
    <property type="match status" value="1"/>
</dbReference>
<dbReference type="Gene3D" id="1.10.10.10">
    <property type="entry name" value="Winged helix-like DNA-binding domain superfamily/Winged helix DNA-binding domain"/>
    <property type="match status" value="1"/>
</dbReference>
<dbReference type="HAMAP" id="MF_00132">
    <property type="entry name" value="Top6A"/>
    <property type="match status" value="1"/>
</dbReference>
<dbReference type="InterPro" id="IPR002815">
    <property type="entry name" value="Spo11/TopoVI_A"/>
</dbReference>
<dbReference type="InterPro" id="IPR013049">
    <property type="entry name" value="Spo11/TopoVI_A_N"/>
</dbReference>
<dbReference type="InterPro" id="IPR036078">
    <property type="entry name" value="Spo11/TopoVI_A_sf"/>
</dbReference>
<dbReference type="InterPro" id="IPR049333">
    <property type="entry name" value="Topo_VI_alpha"/>
</dbReference>
<dbReference type="InterPro" id="IPR004085">
    <property type="entry name" value="TopoVI_A"/>
</dbReference>
<dbReference type="InterPro" id="IPR034136">
    <property type="entry name" value="TOPRIM_Topo6A/Spo11"/>
</dbReference>
<dbReference type="InterPro" id="IPR036388">
    <property type="entry name" value="WH-like_DNA-bd_sf"/>
</dbReference>
<dbReference type="NCBIfam" id="NF003336">
    <property type="entry name" value="PRK04342.1-5"/>
    <property type="match status" value="1"/>
</dbReference>
<dbReference type="PANTHER" id="PTHR10848">
    <property type="entry name" value="MEIOTIC RECOMBINATION PROTEIN SPO11"/>
    <property type="match status" value="1"/>
</dbReference>
<dbReference type="PANTHER" id="PTHR10848:SF0">
    <property type="entry name" value="MEIOTIC RECOMBINATION PROTEIN SPO11"/>
    <property type="match status" value="1"/>
</dbReference>
<dbReference type="Pfam" id="PF21180">
    <property type="entry name" value="TOP6A-Spo11_Toprim"/>
    <property type="match status" value="1"/>
</dbReference>
<dbReference type="Pfam" id="PF20768">
    <property type="entry name" value="Topo_VI_alpha"/>
    <property type="match status" value="1"/>
</dbReference>
<dbReference type="Pfam" id="PF04406">
    <property type="entry name" value="TP6A_N"/>
    <property type="match status" value="1"/>
</dbReference>
<dbReference type="PRINTS" id="PR01550">
    <property type="entry name" value="TOP6AFAMILY"/>
</dbReference>
<dbReference type="PRINTS" id="PR01552">
    <property type="entry name" value="TPISMRASE6A"/>
</dbReference>
<dbReference type="SUPFAM" id="SSF56726">
    <property type="entry name" value="DNA topoisomerase IV, alpha subunit"/>
    <property type="match status" value="1"/>
</dbReference>
<dbReference type="PROSITE" id="PS52041">
    <property type="entry name" value="TOPO_IIB"/>
    <property type="match status" value="1"/>
</dbReference>
<evidence type="ECO:0000255" key="1">
    <source>
        <dbReference type="HAMAP-Rule" id="MF_00132"/>
    </source>
</evidence>
<evidence type="ECO:0000255" key="2">
    <source>
        <dbReference type="PROSITE-ProRule" id="PRU01385"/>
    </source>
</evidence>
<comment type="function">
    <text evidence="1">Relaxes both positive and negative superturns and exhibits a strong decatenase activity.</text>
</comment>
<comment type="catalytic activity">
    <reaction evidence="1">
        <text>ATP-dependent breakage, passage and rejoining of double-stranded DNA.</text>
        <dbReference type="EC" id="5.6.2.2"/>
    </reaction>
</comment>
<comment type="cofactor">
    <cofactor evidence="1">
        <name>Mg(2+)</name>
        <dbReference type="ChEBI" id="CHEBI:18420"/>
    </cofactor>
</comment>
<comment type="subunit">
    <text evidence="1">Homodimer. Heterotetramer of two Top6A and two Top6B chains.</text>
</comment>
<comment type="similarity">
    <text evidence="1">Belongs to the TOP6A family.</text>
</comment>
<feature type="chain" id="PRO_0000145457" description="Type 2 DNA topoisomerase 6 subunit A">
    <location>
        <begin position="1"/>
        <end position="387"/>
    </location>
</feature>
<feature type="domain" description="Topo IIA-type catalytic" evidence="2">
    <location>
        <begin position="12"/>
        <end position="160"/>
    </location>
</feature>
<feature type="active site" description="O-(5'-phospho-DNA)-tyrosine intermediate" evidence="2">
    <location>
        <position position="106"/>
    </location>
</feature>
<feature type="binding site" evidence="1">
    <location>
        <position position="207"/>
    </location>
    <ligand>
        <name>Mg(2+)</name>
        <dbReference type="ChEBI" id="CHEBI:18420"/>
    </ligand>
</feature>
<feature type="binding site" evidence="1">
    <location>
        <position position="259"/>
    </location>
    <ligand>
        <name>Mg(2+)</name>
        <dbReference type="ChEBI" id="CHEBI:18420"/>
    </ligand>
</feature>
<protein>
    <recommendedName>
        <fullName evidence="1">Type 2 DNA topoisomerase 6 subunit A</fullName>
        <ecNumber evidence="1">5.6.2.2</ecNumber>
    </recommendedName>
    <alternativeName>
        <fullName evidence="1">Type II DNA topoisomerase VI subunit A</fullName>
    </alternativeName>
</protein>